<accession>A4JLT6</accession>
<organism>
    <name type="scientific">Burkholderia vietnamiensis (strain G4 / LMG 22486)</name>
    <name type="common">Burkholderia cepacia (strain R1808)</name>
    <dbReference type="NCBI Taxonomy" id="269482"/>
    <lineage>
        <taxon>Bacteria</taxon>
        <taxon>Pseudomonadati</taxon>
        <taxon>Pseudomonadota</taxon>
        <taxon>Betaproteobacteria</taxon>
        <taxon>Burkholderiales</taxon>
        <taxon>Burkholderiaceae</taxon>
        <taxon>Burkholderia</taxon>
        <taxon>Burkholderia cepacia complex</taxon>
    </lineage>
</organism>
<sequence length="346" mass="36552">MLVLGIESSCDETGLALYDTQRGLLAHALHSQIAMHREYGGVVPELASRDHIRRALPLLDEVMIQSGTHRDDIDAIAFTQGPGLAGALLVGASIANALALAWNKPTIGIHHLEGHLLSPLLVDAPPPFPFIALLVSGGHTQLMRVTDVGVYETLGETLDDAAGEAFDKTAKLIGLGYPGGPEVSRLAETGTPGAVVLPRPMLHSGDLDFSFSGLKTAVLTQMKKFEAAKLEGDALERAKADLARGFVDAAVDVLVAKSLAALKQTKLKRLVVAGGVGANRQLRAALSAAAAKRGFDVHYPDLALCTDNGAMIALAGALRLGRWPEQANTDYAFTVKPRWDLASLAR</sequence>
<comment type="function">
    <text evidence="1">Required for the formation of a threonylcarbamoyl group on adenosine at position 37 (t(6)A37) in tRNAs that read codons beginning with adenine. Is involved in the transfer of the threonylcarbamoyl moiety of threonylcarbamoyl-AMP (TC-AMP) to the N6 group of A37, together with TsaE and TsaB. TsaD likely plays a direct catalytic role in this reaction.</text>
</comment>
<comment type="catalytic activity">
    <reaction evidence="1">
        <text>L-threonylcarbamoyladenylate + adenosine(37) in tRNA = N(6)-L-threonylcarbamoyladenosine(37) in tRNA + AMP + H(+)</text>
        <dbReference type="Rhea" id="RHEA:37059"/>
        <dbReference type="Rhea" id="RHEA-COMP:10162"/>
        <dbReference type="Rhea" id="RHEA-COMP:10163"/>
        <dbReference type="ChEBI" id="CHEBI:15378"/>
        <dbReference type="ChEBI" id="CHEBI:73682"/>
        <dbReference type="ChEBI" id="CHEBI:74411"/>
        <dbReference type="ChEBI" id="CHEBI:74418"/>
        <dbReference type="ChEBI" id="CHEBI:456215"/>
        <dbReference type="EC" id="2.3.1.234"/>
    </reaction>
</comment>
<comment type="cofactor">
    <cofactor evidence="1">
        <name>Fe(2+)</name>
        <dbReference type="ChEBI" id="CHEBI:29033"/>
    </cofactor>
    <text evidence="1">Binds 1 Fe(2+) ion per subunit.</text>
</comment>
<comment type="subcellular location">
    <subcellularLocation>
        <location evidence="1">Cytoplasm</location>
    </subcellularLocation>
</comment>
<comment type="similarity">
    <text evidence="1">Belongs to the KAE1 / TsaD family.</text>
</comment>
<protein>
    <recommendedName>
        <fullName evidence="1">tRNA N6-adenosine threonylcarbamoyltransferase</fullName>
        <ecNumber evidence="1">2.3.1.234</ecNumber>
    </recommendedName>
    <alternativeName>
        <fullName evidence="1">N6-L-threonylcarbamoyladenine synthase</fullName>
        <shortName evidence="1">t(6)A synthase</shortName>
    </alternativeName>
    <alternativeName>
        <fullName evidence="1">t(6)A37 threonylcarbamoyladenosine biosynthesis protein TsaD</fullName>
    </alternativeName>
    <alternativeName>
        <fullName evidence="1">tRNA threonylcarbamoyladenosine biosynthesis protein TsaD</fullName>
    </alternativeName>
</protein>
<gene>
    <name evidence="1" type="primary">tsaD</name>
    <name type="synonym">gcp</name>
    <name type="ordered locus">Bcep1808_4259</name>
</gene>
<dbReference type="EC" id="2.3.1.234" evidence="1"/>
<dbReference type="EMBL" id="CP000615">
    <property type="protein sequence ID" value="ABO57239.1"/>
    <property type="molecule type" value="Genomic_DNA"/>
</dbReference>
<dbReference type="SMR" id="A4JLT6"/>
<dbReference type="KEGG" id="bvi:Bcep1808_4259"/>
<dbReference type="eggNOG" id="COG0533">
    <property type="taxonomic scope" value="Bacteria"/>
</dbReference>
<dbReference type="HOGENOM" id="CLU_023208_0_0_4"/>
<dbReference type="Proteomes" id="UP000002287">
    <property type="component" value="Chromosome 2"/>
</dbReference>
<dbReference type="GO" id="GO:0005737">
    <property type="term" value="C:cytoplasm"/>
    <property type="evidence" value="ECO:0007669"/>
    <property type="project" value="UniProtKB-SubCell"/>
</dbReference>
<dbReference type="GO" id="GO:0005506">
    <property type="term" value="F:iron ion binding"/>
    <property type="evidence" value="ECO:0007669"/>
    <property type="project" value="UniProtKB-UniRule"/>
</dbReference>
<dbReference type="GO" id="GO:0061711">
    <property type="term" value="F:N(6)-L-threonylcarbamoyladenine synthase activity"/>
    <property type="evidence" value="ECO:0007669"/>
    <property type="project" value="UniProtKB-EC"/>
</dbReference>
<dbReference type="GO" id="GO:0002949">
    <property type="term" value="P:tRNA threonylcarbamoyladenosine modification"/>
    <property type="evidence" value="ECO:0007669"/>
    <property type="project" value="UniProtKB-UniRule"/>
</dbReference>
<dbReference type="CDD" id="cd24133">
    <property type="entry name" value="ASKHA_NBD_TsaD_bac"/>
    <property type="match status" value="1"/>
</dbReference>
<dbReference type="FunFam" id="3.30.420.40:FF:000012">
    <property type="entry name" value="tRNA N6-adenosine threonylcarbamoyltransferase"/>
    <property type="match status" value="1"/>
</dbReference>
<dbReference type="FunFam" id="3.30.420.40:FF:000040">
    <property type="entry name" value="tRNA N6-adenosine threonylcarbamoyltransferase"/>
    <property type="match status" value="1"/>
</dbReference>
<dbReference type="Gene3D" id="3.30.420.40">
    <property type="match status" value="2"/>
</dbReference>
<dbReference type="HAMAP" id="MF_01445">
    <property type="entry name" value="TsaD"/>
    <property type="match status" value="1"/>
</dbReference>
<dbReference type="InterPro" id="IPR043129">
    <property type="entry name" value="ATPase_NBD"/>
</dbReference>
<dbReference type="InterPro" id="IPR000905">
    <property type="entry name" value="Gcp-like_dom"/>
</dbReference>
<dbReference type="InterPro" id="IPR017861">
    <property type="entry name" value="KAE1/TsaD"/>
</dbReference>
<dbReference type="InterPro" id="IPR022450">
    <property type="entry name" value="TsaD"/>
</dbReference>
<dbReference type="NCBIfam" id="TIGR00329">
    <property type="entry name" value="gcp_kae1"/>
    <property type="match status" value="1"/>
</dbReference>
<dbReference type="NCBIfam" id="TIGR03723">
    <property type="entry name" value="T6A_TsaD_YgjD"/>
    <property type="match status" value="1"/>
</dbReference>
<dbReference type="PANTHER" id="PTHR11735">
    <property type="entry name" value="TRNA N6-ADENOSINE THREONYLCARBAMOYLTRANSFERASE"/>
    <property type="match status" value="1"/>
</dbReference>
<dbReference type="PANTHER" id="PTHR11735:SF6">
    <property type="entry name" value="TRNA N6-ADENOSINE THREONYLCARBAMOYLTRANSFERASE, MITOCHONDRIAL"/>
    <property type="match status" value="1"/>
</dbReference>
<dbReference type="Pfam" id="PF00814">
    <property type="entry name" value="TsaD"/>
    <property type="match status" value="1"/>
</dbReference>
<dbReference type="PRINTS" id="PR00789">
    <property type="entry name" value="OSIALOPTASE"/>
</dbReference>
<dbReference type="SUPFAM" id="SSF53067">
    <property type="entry name" value="Actin-like ATPase domain"/>
    <property type="match status" value="2"/>
</dbReference>
<name>TSAD_BURVG</name>
<evidence type="ECO:0000255" key="1">
    <source>
        <dbReference type="HAMAP-Rule" id="MF_01445"/>
    </source>
</evidence>
<keyword id="KW-0012">Acyltransferase</keyword>
<keyword id="KW-0963">Cytoplasm</keyword>
<keyword id="KW-0408">Iron</keyword>
<keyword id="KW-0479">Metal-binding</keyword>
<keyword id="KW-0808">Transferase</keyword>
<keyword id="KW-0819">tRNA processing</keyword>
<reference key="1">
    <citation type="submission" date="2007-03" db="EMBL/GenBank/DDBJ databases">
        <title>Complete sequence of chromosome 2 of Burkholderia vietnamiensis G4.</title>
        <authorList>
            <consortium name="US DOE Joint Genome Institute"/>
            <person name="Copeland A."/>
            <person name="Lucas S."/>
            <person name="Lapidus A."/>
            <person name="Barry K."/>
            <person name="Detter J.C."/>
            <person name="Glavina del Rio T."/>
            <person name="Hammon N."/>
            <person name="Israni S."/>
            <person name="Dalin E."/>
            <person name="Tice H."/>
            <person name="Pitluck S."/>
            <person name="Chain P."/>
            <person name="Malfatti S."/>
            <person name="Shin M."/>
            <person name="Vergez L."/>
            <person name="Schmutz J."/>
            <person name="Larimer F."/>
            <person name="Land M."/>
            <person name="Hauser L."/>
            <person name="Kyrpides N."/>
            <person name="Tiedje J."/>
            <person name="Richardson P."/>
        </authorList>
    </citation>
    <scope>NUCLEOTIDE SEQUENCE [LARGE SCALE GENOMIC DNA]</scope>
    <source>
        <strain>G4 / LMG 22486</strain>
    </source>
</reference>
<proteinExistence type="inferred from homology"/>
<feature type="chain" id="PRO_1000024423" description="tRNA N6-adenosine threonylcarbamoyltransferase">
    <location>
        <begin position="1"/>
        <end position="346"/>
    </location>
</feature>
<feature type="binding site" evidence="1">
    <location>
        <position position="111"/>
    </location>
    <ligand>
        <name>Fe cation</name>
        <dbReference type="ChEBI" id="CHEBI:24875"/>
    </ligand>
</feature>
<feature type="binding site" evidence="1">
    <location>
        <position position="115"/>
    </location>
    <ligand>
        <name>Fe cation</name>
        <dbReference type="ChEBI" id="CHEBI:24875"/>
    </ligand>
</feature>
<feature type="binding site" evidence="1">
    <location>
        <begin position="134"/>
        <end position="138"/>
    </location>
    <ligand>
        <name>substrate</name>
    </ligand>
</feature>
<feature type="binding site" evidence="1">
    <location>
        <position position="167"/>
    </location>
    <ligand>
        <name>substrate</name>
    </ligand>
</feature>
<feature type="binding site" evidence="1">
    <location>
        <position position="180"/>
    </location>
    <ligand>
        <name>substrate</name>
    </ligand>
</feature>
<feature type="binding site" evidence="1">
    <location>
        <position position="279"/>
    </location>
    <ligand>
        <name>substrate</name>
    </ligand>
</feature>
<feature type="binding site" evidence="1">
    <location>
        <position position="307"/>
    </location>
    <ligand>
        <name>Fe cation</name>
        <dbReference type="ChEBI" id="CHEBI:24875"/>
    </ligand>
</feature>